<sequence length="309" mass="35681">MPIRVLDELPAVNFLREENVFVMTTSRATGQEIRPLKVIILNLMPKKIETENQFLRLLSNSPLQVDIQLLRIDARESRNTPAEHLNNFYCNFEDICDQNFDGLIVTGAPLGLVEFNDVAYWPQIRQVLEWAKDHVTSTLFVCWAVQAALNILYGIPKQTRTDKLSGVYEHHILHPYALLTRGFDDTFLAPHSRYADFPAALIRDYTDLEILAETEGGDAYLFASKDKRIAFVTGHPEYDAHTLAGEYFRDVEAGLNPDIPYNYFPKNDPQNKPRATWRSHGNLLFTNWLNYYVYQITPYDLRHMNPTLD</sequence>
<proteinExistence type="inferred from homology"/>
<keyword id="KW-0012">Acyltransferase</keyword>
<keyword id="KW-0028">Amino-acid biosynthesis</keyword>
<keyword id="KW-0963">Cytoplasm</keyword>
<keyword id="KW-0486">Methionine biosynthesis</keyword>
<keyword id="KW-1185">Reference proteome</keyword>
<keyword id="KW-0808">Transferase</keyword>
<reference key="1">
    <citation type="submission" date="2007-11" db="EMBL/GenBank/DDBJ databases">
        <authorList>
            <consortium name="The Salmonella enterica serovar Arizonae Genome Sequencing Project"/>
            <person name="McClelland M."/>
            <person name="Sanderson E.K."/>
            <person name="Porwollik S."/>
            <person name="Spieth J."/>
            <person name="Clifton W.S."/>
            <person name="Fulton R."/>
            <person name="Chunyan W."/>
            <person name="Wollam A."/>
            <person name="Shah N."/>
            <person name="Pepin K."/>
            <person name="Bhonagiri V."/>
            <person name="Nash W."/>
            <person name="Johnson M."/>
            <person name="Thiruvilangam P."/>
            <person name="Wilson R."/>
        </authorList>
    </citation>
    <scope>NUCLEOTIDE SEQUENCE [LARGE SCALE GENOMIC DNA]</scope>
    <source>
        <strain>ATCC BAA-731 / CDC346-86 / RSK2980</strain>
    </source>
</reference>
<gene>
    <name evidence="1" type="primary">metAS</name>
    <name type="ordered locus">SARI_03474</name>
</gene>
<evidence type="ECO:0000255" key="1">
    <source>
        <dbReference type="HAMAP-Rule" id="MF_00295"/>
    </source>
</evidence>
<organism>
    <name type="scientific">Salmonella arizonae (strain ATCC BAA-731 / CDC346-86 / RSK2980)</name>
    <dbReference type="NCBI Taxonomy" id="41514"/>
    <lineage>
        <taxon>Bacteria</taxon>
        <taxon>Pseudomonadati</taxon>
        <taxon>Pseudomonadota</taxon>
        <taxon>Gammaproteobacteria</taxon>
        <taxon>Enterobacterales</taxon>
        <taxon>Enterobacteriaceae</taxon>
        <taxon>Salmonella</taxon>
    </lineage>
</organism>
<protein>
    <recommendedName>
        <fullName evidence="1">Homoserine O-succinyltransferase</fullName>
        <shortName evidence="1">HST</shortName>
        <ecNumber evidence="1">2.3.1.46</ecNumber>
    </recommendedName>
    <alternativeName>
        <fullName evidence="1">Homoserine transsuccinylase</fullName>
        <shortName evidence="1">HTS</shortName>
    </alternativeName>
</protein>
<comment type="function">
    <text evidence="1">Transfers a succinyl group from succinyl-CoA to L-homoserine, forming succinyl-L-homoserine.</text>
</comment>
<comment type="catalytic activity">
    <reaction evidence="1">
        <text>L-homoserine + succinyl-CoA = O-succinyl-L-homoserine + CoA</text>
        <dbReference type="Rhea" id="RHEA:22008"/>
        <dbReference type="ChEBI" id="CHEBI:57287"/>
        <dbReference type="ChEBI" id="CHEBI:57292"/>
        <dbReference type="ChEBI" id="CHEBI:57476"/>
        <dbReference type="ChEBI" id="CHEBI:57661"/>
        <dbReference type="EC" id="2.3.1.46"/>
    </reaction>
</comment>
<comment type="pathway">
    <text evidence="1">Amino-acid biosynthesis; L-methionine biosynthesis via de novo pathway; O-succinyl-L-homoserine from L-homoserine: step 1/1.</text>
</comment>
<comment type="subunit">
    <text evidence="1">Homodimer.</text>
</comment>
<comment type="subcellular location">
    <subcellularLocation>
        <location evidence="1">Cytoplasm</location>
    </subcellularLocation>
</comment>
<comment type="similarity">
    <text evidence="1">Belongs to the MetA family.</text>
</comment>
<dbReference type="EC" id="2.3.1.46" evidence="1"/>
<dbReference type="EMBL" id="CP000880">
    <property type="protein sequence ID" value="ABX23303.1"/>
    <property type="molecule type" value="Genomic_DNA"/>
</dbReference>
<dbReference type="SMR" id="A9MHC0"/>
<dbReference type="STRING" id="41514.SARI_03474"/>
<dbReference type="KEGG" id="ses:SARI_03474"/>
<dbReference type="HOGENOM" id="CLU_057851_0_1_6"/>
<dbReference type="UniPathway" id="UPA00051">
    <property type="reaction ID" value="UER00075"/>
</dbReference>
<dbReference type="Proteomes" id="UP000002084">
    <property type="component" value="Chromosome"/>
</dbReference>
<dbReference type="GO" id="GO:0005737">
    <property type="term" value="C:cytoplasm"/>
    <property type="evidence" value="ECO:0007669"/>
    <property type="project" value="UniProtKB-SubCell"/>
</dbReference>
<dbReference type="GO" id="GO:0004414">
    <property type="term" value="F:homoserine O-acetyltransferase activity"/>
    <property type="evidence" value="ECO:0007669"/>
    <property type="project" value="UniProtKB-UniRule"/>
</dbReference>
<dbReference type="GO" id="GO:0008899">
    <property type="term" value="F:homoserine O-succinyltransferase activity"/>
    <property type="evidence" value="ECO:0007669"/>
    <property type="project" value="UniProtKB-EC"/>
</dbReference>
<dbReference type="GO" id="GO:0019281">
    <property type="term" value="P:L-methionine biosynthetic process from homoserine via O-succinyl-L-homoserine and cystathionine"/>
    <property type="evidence" value="ECO:0007669"/>
    <property type="project" value="InterPro"/>
</dbReference>
<dbReference type="CDD" id="cd03131">
    <property type="entry name" value="GATase1_HTS"/>
    <property type="match status" value="1"/>
</dbReference>
<dbReference type="FunFam" id="3.40.50.880:FF:000004">
    <property type="entry name" value="Homoserine O-succinyltransferase"/>
    <property type="match status" value="1"/>
</dbReference>
<dbReference type="Gene3D" id="3.40.50.880">
    <property type="match status" value="1"/>
</dbReference>
<dbReference type="HAMAP" id="MF_00295">
    <property type="entry name" value="MetA_acyltransf"/>
    <property type="match status" value="1"/>
</dbReference>
<dbReference type="InterPro" id="IPR029062">
    <property type="entry name" value="Class_I_gatase-like"/>
</dbReference>
<dbReference type="InterPro" id="IPR005697">
    <property type="entry name" value="HST_MetA"/>
</dbReference>
<dbReference type="InterPro" id="IPR033752">
    <property type="entry name" value="MetA_family"/>
</dbReference>
<dbReference type="NCBIfam" id="TIGR01001">
    <property type="entry name" value="metA"/>
    <property type="match status" value="1"/>
</dbReference>
<dbReference type="PANTHER" id="PTHR20919">
    <property type="entry name" value="HOMOSERINE O-SUCCINYLTRANSFERASE"/>
    <property type="match status" value="1"/>
</dbReference>
<dbReference type="PANTHER" id="PTHR20919:SF0">
    <property type="entry name" value="HOMOSERINE O-SUCCINYLTRANSFERASE"/>
    <property type="match status" value="1"/>
</dbReference>
<dbReference type="Pfam" id="PF04204">
    <property type="entry name" value="HTS"/>
    <property type="match status" value="1"/>
</dbReference>
<dbReference type="PIRSF" id="PIRSF000450">
    <property type="entry name" value="H_ser_succinyltr"/>
    <property type="match status" value="1"/>
</dbReference>
<dbReference type="SUPFAM" id="SSF52317">
    <property type="entry name" value="Class I glutamine amidotransferase-like"/>
    <property type="match status" value="1"/>
</dbReference>
<accession>A9MHC0</accession>
<name>METAS_SALAR</name>
<feature type="chain" id="PRO_1000078934" description="Homoserine O-succinyltransferase">
    <location>
        <begin position="1"/>
        <end position="309"/>
    </location>
</feature>
<feature type="active site" description="Acyl-thioester intermediate" evidence="1">
    <location>
        <position position="142"/>
    </location>
</feature>
<feature type="active site" description="Proton acceptor" evidence="1">
    <location>
        <position position="235"/>
    </location>
</feature>
<feature type="active site" evidence="1">
    <location>
        <position position="237"/>
    </location>
</feature>
<feature type="binding site" evidence="1">
    <location>
        <position position="163"/>
    </location>
    <ligand>
        <name>substrate</name>
    </ligand>
</feature>
<feature type="binding site" evidence="1">
    <location>
        <position position="192"/>
    </location>
    <ligand>
        <name>substrate</name>
    </ligand>
</feature>
<feature type="binding site" evidence="1">
    <location>
        <position position="249"/>
    </location>
    <ligand>
        <name>substrate</name>
    </ligand>
</feature>
<feature type="site" description="Important for acyl-CoA specificity" evidence="1">
    <location>
        <position position="111"/>
    </location>
</feature>
<feature type="site" description="Important for substrate specificity" evidence="1">
    <location>
        <position position="192"/>
    </location>
</feature>